<sequence>MASDEGKLFVGGLSFDTNEQALEQVFSKYGQISEVVVVKDRETQRSRGFGFVTFENIDDAKDAMMAMNGKSVDGRQIRVDQAGKSSDNRSRGYRGGSAGGRGFFRGGRSRGRGFSRGGGDRGYGGGRFESRSGGYGGSRDYYASRSQGGSYGYRSSGGSYRDSYDSYATHNE</sequence>
<organism>
    <name type="scientific">Mus musculus</name>
    <name type="common">Mouse</name>
    <dbReference type="NCBI Taxonomy" id="10090"/>
    <lineage>
        <taxon>Eukaryota</taxon>
        <taxon>Metazoa</taxon>
        <taxon>Chordata</taxon>
        <taxon>Craniata</taxon>
        <taxon>Vertebrata</taxon>
        <taxon>Euteleostomi</taxon>
        <taxon>Mammalia</taxon>
        <taxon>Eutheria</taxon>
        <taxon>Euarchontoglires</taxon>
        <taxon>Glires</taxon>
        <taxon>Rodentia</taxon>
        <taxon>Myomorpha</taxon>
        <taxon>Muroidea</taxon>
        <taxon>Muridae</taxon>
        <taxon>Murinae</taxon>
        <taxon>Mus</taxon>
        <taxon>Mus</taxon>
    </lineage>
</organism>
<evidence type="ECO:0000250" key="1"/>
<evidence type="ECO:0000250" key="2">
    <source>
        <dbReference type="UniProtKB" id="Q14011"/>
    </source>
</evidence>
<evidence type="ECO:0000255" key="3">
    <source>
        <dbReference type="PROSITE-ProRule" id="PRU00176"/>
    </source>
</evidence>
<evidence type="ECO:0000256" key="4">
    <source>
        <dbReference type="SAM" id="MobiDB-lite"/>
    </source>
</evidence>
<evidence type="ECO:0000269" key="5">
    <source>
    </source>
</evidence>
<evidence type="ECO:0000269" key="6">
    <source>
    </source>
</evidence>
<dbReference type="EMBL" id="D78135">
    <property type="protein sequence ID" value="BAA11213.1"/>
    <property type="molecule type" value="mRNA"/>
</dbReference>
<dbReference type="EMBL" id="AK014655">
    <property type="protein sequence ID" value="BAB29491.1"/>
    <property type="molecule type" value="mRNA"/>
</dbReference>
<dbReference type="EMBL" id="AK132584">
    <property type="protein sequence ID" value="BAE21245.1"/>
    <property type="molecule type" value="mRNA"/>
</dbReference>
<dbReference type="EMBL" id="BC075699">
    <property type="protein sequence ID" value="AAH75699.1"/>
    <property type="molecule type" value="mRNA"/>
</dbReference>
<dbReference type="CCDS" id="CCDS35975.1"/>
<dbReference type="RefSeq" id="NP_001366351.1">
    <property type="nucleotide sequence ID" value="NM_001379422.1"/>
</dbReference>
<dbReference type="RefSeq" id="NP_001366353.1">
    <property type="nucleotide sequence ID" value="NM_001379424.1"/>
</dbReference>
<dbReference type="RefSeq" id="NP_001366354.1">
    <property type="nucleotide sequence ID" value="NM_001379425.1"/>
</dbReference>
<dbReference type="RefSeq" id="NP_031731.1">
    <property type="nucleotide sequence ID" value="NM_007705.3"/>
</dbReference>
<dbReference type="SMR" id="P60824"/>
<dbReference type="BioGRID" id="198716">
    <property type="interactions" value="22"/>
</dbReference>
<dbReference type="FunCoup" id="P60824">
    <property type="interactions" value="3493"/>
</dbReference>
<dbReference type="IntAct" id="P60824">
    <property type="interactions" value="2"/>
</dbReference>
<dbReference type="MINT" id="P60824"/>
<dbReference type="STRING" id="10090.ENSMUSP00000101004"/>
<dbReference type="GlyGen" id="P60824">
    <property type="glycosylation" value="1 site, 1 N-linked glycan (1 site)"/>
</dbReference>
<dbReference type="iPTMnet" id="P60824"/>
<dbReference type="PhosphoSitePlus" id="P60824"/>
<dbReference type="jPOST" id="P60824"/>
<dbReference type="PaxDb" id="10090-ENSMUSP00000101004"/>
<dbReference type="PeptideAtlas" id="P60824"/>
<dbReference type="ProteomicsDB" id="283563"/>
<dbReference type="Pumba" id="P60824"/>
<dbReference type="Antibodypedia" id="22628">
    <property type="antibodies" value="364 antibodies from 36 providers"/>
</dbReference>
<dbReference type="DNASU" id="12696"/>
<dbReference type="Ensembl" id="ENSMUST00000105365.9">
    <property type="protein sequence ID" value="ENSMUSP00000101004.3"/>
    <property type="gene ID" value="ENSMUSG00000045193.14"/>
</dbReference>
<dbReference type="GeneID" id="12696"/>
<dbReference type="KEGG" id="mmu:12696"/>
<dbReference type="UCSC" id="uc007gce.1">
    <property type="organism name" value="mouse"/>
</dbReference>
<dbReference type="AGR" id="MGI:893588"/>
<dbReference type="CTD" id="1153"/>
<dbReference type="MGI" id="MGI:893588">
    <property type="gene designation" value="Cirbp"/>
</dbReference>
<dbReference type="VEuPathDB" id="HostDB:ENSMUSG00000045193"/>
<dbReference type="eggNOG" id="KOG0118">
    <property type="taxonomic scope" value="Eukaryota"/>
</dbReference>
<dbReference type="GeneTree" id="ENSGT00940000153524"/>
<dbReference type="InParanoid" id="P60824"/>
<dbReference type="OMA" id="GWEDRSY"/>
<dbReference type="OrthoDB" id="439808at2759"/>
<dbReference type="PhylomeDB" id="P60824"/>
<dbReference type="TreeFam" id="TF354331"/>
<dbReference type="BioGRID-ORCS" id="12696">
    <property type="hits" value="3 hits in 77 CRISPR screens"/>
</dbReference>
<dbReference type="CD-CODE" id="764D0258">
    <property type="entry name" value="Neuronal RNP granule"/>
</dbReference>
<dbReference type="ChiTaRS" id="Cirbp">
    <property type="organism name" value="mouse"/>
</dbReference>
<dbReference type="PRO" id="PR:P60824"/>
<dbReference type="Proteomes" id="UP000000589">
    <property type="component" value="Chromosome 10"/>
</dbReference>
<dbReference type="RNAct" id="P60824">
    <property type="molecule type" value="protein"/>
</dbReference>
<dbReference type="Bgee" id="ENSMUSG00000045193">
    <property type="expression patterns" value="Expressed in retinal neural layer and 244 other cell types or tissues"/>
</dbReference>
<dbReference type="ExpressionAtlas" id="P60824">
    <property type="expression patterns" value="baseline and differential"/>
</dbReference>
<dbReference type="GO" id="GO:0005737">
    <property type="term" value="C:cytoplasm"/>
    <property type="evidence" value="ECO:0000314"/>
    <property type="project" value="UniProtKB"/>
</dbReference>
<dbReference type="GO" id="GO:0010494">
    <property type="term" value="C:cytoplasmic stress granule"/>
    <property type="evidence" value="ECO:0000314"/>
    <property type="project" value="UniProtKB"/>
</dbReference>
<dbReference type="GO" id="GO:0005654">
    <property type="term" value="C:nucleoplasm"/>
    <property type="evidence" value="ECO:0000314"/>
    <property type="project" value="MGI"/>
</dbReference>
<dbReference type="GO" id="GO:0005634">
    <property type="term" value="C:nucleus"/>
    <property type="evidence" value="ECO:0000314"/>
    <property type="project" value="UniProtKB"/>
</dbReference>
<dbReference type="GO" id="GO:0003730">
    <property type="term" value="F:mRNA 3'-UTR binding"/>
    <property type="evidence" value="ECO:0000250"/>
    <property type="project" value="UniProtKB"/>
</dbReference>
<dbReference type="GO" id="GO:0008266">
    <property type="term" value="F:poly(U) RNA binding"/>
    <property type="evidence" value="ECO:0000314"/>
    <property type="project" value="MGI"/>
</dbReference>
<dbReference type="GO" id="GO:0003723">
    <property type="term" value="F:RNA binding"/>
    <property type="evidence" value="ECO:0000314"/>
    <property type="project" value="MGI"/>
</dbReference>
<dbReference type="GO" id="GO:0070181">
    <property type="term" value="F:small ribosomal subunit rRNA binding"/>
    <property type="evidence" value="ECO:0000250"/>
    <property type="project" value="UniProtKB"/>
</dbReference>
<dbReference type="GO" id="GO:0030371">
    <property type="term" value="F:translation repressor activity"/>
    <property type="evidence" value="ECO:0000314"/>
    <property type="project" value="UniProtKB"/>
</dbReference>
<dbReference type="GO" id="GO:0070417">
    <property type="term" value="P:cellular response to cold"/>
    <property type="evidence" value="ECO:0000314"/>
    <property type="project" value="MGI"/>
</dbReference>
<dbReference type="GO" id="GO:0048255">
    <property type="term" value="P:mRNA stabilization"/>
    <property type="evidence" value="ECO:0000250"/>
    <property type="project" value="UniProtKB"/>
</dbReference>
<dbReference type="GO" id="GO:0030308">
    <property type="term" value="P:negative regulation of cell growth"/>
    <property type="evidence" value="ECO:0000315"/>
    <property type="project" value="MGI"/>
</dbReference>
<dbReference type="GO" id="GO:0045727">
    <property type="term" value="P:positive regulation of translation"/>
    <property type="evidence" value="ECO:0000250"/>
    <property type="project" value="UniProtKB"/>
</dbReference>
<dbReference type="GO" id="GO:1902806">
    <property type="term" value="P:regulation of cell cycle G1/S phase transition"/>
    <property type="evidence" value="ECO:0000314"/>
    <property type="project" value="MGI"/>
</dbReference>
<dbReference type="GO" id="GO:0009411">
    <property type="term" value="P:response to UV"/>
    <property type="evidence" value="ECO:0000250"/>
    <property type="project" value="UniProtKB"/>
</dbReference>
<dbReference type="GO" id="GO:0034063">
    <property type="term" value="P:stress granule assembly"/>
    <property type="evidence" value="ECO:0000314"/>
    <property type="project" value="UniProtKB"/>
</dbReference>
<dbReference type="CDD" id="cd12449">
    <property type="entry name" value="RRM_CIRBP_RBM3"/>
    <property type="match status" value="1"/>
</dbReference>
<dbReference type="FunFam" id="3.30.70.330:FF:000174">
    <property type="entry name" value="cold-inducible RNA-binding protein isoform X2"/>
    <property type="match status" value="1"/>
</dbReference>
<dbReference type="Gene3D" id="3.30.70.330">
    <property type="match status" value="1"/>
</dbReference>
<dbReference type="InterPro" id="IPR012677">
    <property type="entry name" value="Nucleotide-bd_a/b_plait_sf"/>
</dbReference>
<dbReference type="InterPro" id="IPR035979">
    <property type="entry name" value="RBD_domain_sf"/>
</dbReference>
<dbReference type="InterPro" id="IPR050441">
    <property type="entry name" value="RBM"/>
</dbReference>
<dbReference type="InterPro" id="IPR034278">
    <property type="entry name" value="RBM3/CIRBP_RRM"/>
</dbReference>
<dbReference type="InterPro" id="IPR000504">
    <property type="entry name" value="RRM_dom"/>
</dbReference>
<dbReference type="InterPro" id="IPR003954">
    <property type="entry name" value="RRM_dom_euk"/>
</dbReference>
<dbReference type="PANTHER" id="PTHR48034">
    <property type="entry name" value="TRANSFORMER-2 SEX-DETERMINING PROTEIN-RELATED"/>
    <property type="match status" value="1"/>
</dbReference>
<dbReference type="Pfam" id="PF00076">
    <property type="entry name" value="RRM_1"/>
    <property type="match status" value="1"/>
</dbReference>
<dbReference type="SMART" id="SM00360">
    <property type="entry name" value="RRM"/>
    <property type="match status" value="1"/>
</dbReference>
<dbReference type="SMART" id="SM00361">
    <property type="entry name" value="RRM_1"/>
    <property type="match status" value="1"/>
</dbReference>
<dbReference type="SUPFAM" id="SSF54928">
    <property type="entry name" value="RNA-binding domain, RBD"/>
    <property type="match status" value="1"/>
</dbReference>
<dbReference type="PROSITE" id="PS50102">
    <property type="entry name" value="RRM"/>
    <property type="match status" value="1"/>
</dbReference>
<reference key="1">
    <citation type="journal article" date="1997" name="J. Cell Biol.">
        <title>A glycine-rich RNA-binding protein mediating cold-inducible suppression of mammalian cell growth.</title>
        <authorList>
            <person name="Nishiyama H."/>
            <person name="Itoh K."/>
            <person name="Kaneko Y."/>
            <person name="Kishishita M."/>
            <person name="Yoshida O."/>
            <person name="Fujita J."/>
        </authorList>
    </citation>
    <scope>NUCLEOTIDE SEQUENCE [MRNA]</scope>
    <scope>FUNCTION</scope>
    <scope>INDUCTION BY COLD-SHOCK</scope>
    <source>
        <strain>DDY/STD</strain>
        <tissue>Testis</tissue>
    </source>
</reference>
<reference key="2">
    <citation type="journal article" date="2005" name="Science">
        <title>The transcriptional landscape of the mammalian genome.</title>
        <authorList>
            <person name="Carninci P."/>
            <person name="Kasukawa T."/>
            <person name="Katayama S."/>
            <person name="Gough J."/>
            <person name="Frith M.C."/>
            <person name="Maeda N."/>
            <person name="Oyama R."/>
            <person name="Ravasi T."/>
            <person name="Lenhard B."/>
            <person name="Wells C."/>
            <person name="Kodzius R."/>
            <person name="Shimokawa K."/>
            <person name="Bajic V.B."/>
            <person name="Brenner S.E."/>
            <person name="Batalov S."/>
            <person name="Forrest A.R."/>
            <person name="Zavolan M."/>
            <person name="Davis M.J."/>
            <person name="Wilming L.G."/>
            <person name="Aidinis V."/>
            <person name="Allen J.E."/>
            <person name="Ambesi-Impiombato A."/>
            <person name="Apweiler R."/>
            <person name="Aturaliya R.N."/>
            <person name="Bailey T.L."/>
            <person name="Bansal M."/>
            <person name="Baxter L."/>
            <person name="Beisel K.W."/>
            <person name="Bersano T."/>
            <person name="Bono H."/>
            <person name="Chalk A.M."/>
            <person name="Chiu K.P."/>
            <person name="Choudhary V."/>
            <person name="Christoffels A."/>
            <person name="Clutterbuck D.R."/>
            <person name="Crowe M.L."/>
            <person name="Dalla E."/>
            <person name="Dalrymple B.P."/>
            <person name="de Bono B."/>
            <person name="Della Gatta G."/>
            <person name="di Bernardo D."/>
            <person name="Down T."/>
            <person name="Engstrom P."/>
            <person name="Fagiolini M."/>
            <person name="Faulkner G."/>
            <person name="Fletcher C.F."/>
            <person name="Fukushima T."/>
            <person name="Furuno M."/>
            <person name="Futaki S."/>
            <person name="Gariboldi M."/>
            <person name="Georgii-Hemming P."/>
            <person name="Gingeras T.R."/>
            <person name="Gojobori T."/>
            <person name="Green R.E."/>
            <person name="Gustincich S."/>
            <person name="Harbers M."/>
            <person name="Hayashi Y."/>
            <person name="Hensch T.K."/>
            <person name="Hirokawa N."/>
            <person name="Hill D."/>
            <person name="Huminiecki L."/>
            <person name="Iacono M."/>
            <person name="Ikeo K."/>
            <person name="Iwama A."/>
            <person name="Ishikawa T."/>
            <person name="Jakt M."/>
            <person name="Kanapin A."/>
            <person name="Katoh M."/>
            <person name="Kawasawa Y."/>
            <person name="Kelso J."/>
            <person name="Kitamura H."/>
            <person name="Kitano H."/>
            <person name="Kollias G."/>
            <person name="Krishnan S.P."/>
            <person name="Kruger A."/>
            <person name="Kummerfeld S.K."/>
            <person name="Kurochkin I.V."/>
            <person name="Lareau L.F."/>
            <person name="Lazarevic D."/>
            <person name="Lipovich L."/>
            <person name="Liu J."/>
            <person name="Liuni S."/>
            <person name="McWilliam S."/>
            <person name="Madan Babu M."/>
            <person name="Madera M."/>
            <person name="Marchionni L."/>
            <person name="Matsuda H."/>
            <person name="Matsuzawa S."/>
            <person name="Miki H."/>
            <person name="Mignone F."/>
            <person name="Miyake S."/>
            <person name="Morris K."/>
            <person name="Mottagui-Tabar S."/>
            <person name="Mulder N."/>
            <person name="Nakano N."/>
            <person name="Nakauchi H."/>
            <person name="Ng P."/>
            <person name="Nilsson R."/>
            <person name="Nishiguchi S."/>
            <person name="Nishikawa S."/>
            <person name="Nori F."/>
            <person name="Ohara O."/>
            <person name="Okazaki Y."/>
            <person name="Orlando V."/>
            <person name="Pang K.C."/>
            <person name="Pavan W.J."/>
            <person name="Pavesi G."/>
            <person name="Pesole G."/>
            <person name="Petrovsky N."/>
            <person name="Piazza S."/>
            <person name="Reed J."/>
            <person name="Reid J.F."/>
            <person name="Ring B.Z."/>
            <person name="Ringwald M."/>
            <person name="Rost B."/>
            <person name="Ruan Y."/>
            <person name="Salzberg S.L."/>
            <person name="Sandelin A."/>
            <person name="Schneider C."/>
            <person name="Schoenbach C."/>
            <person name="Sekiguchi K."/>
            <person name="Semple C.A."/>
            <person name="Seno S."/>
            <person name="Sessa L."/>
            <person name="Sheng Y."/>
            <person name="Shibata Y."/>
            <person name="Shimada H."/>
            <person name="Shimada K."/>
            <person name="Silva D."/>
            <person name="Sinclair B."/>
            <person name="Sperling S."/>
            <person name="Stupka E."/>
            <person name="Sugiura K."/>
            <person name="Sultana R."/>
            <person name="Takenaka Y."/>
            <person name="Taki K."/>
            <person name="Tammoja K."/>
            <person name="Tan S.L."/>
            <person name="Tang S."/>
            <person name="Taylor M.S."/>
            <person name="Tegner J."/>
            <person name="Teichmann S.A."/>
            <person name="Ueda H.R."/>
            <person name="van Nimwegen E."/>
            <person name="Verardo R."/>
            <person name="Wei C.L."/>
            <person name="Yagi K."/>
            <person name="Yamanishi H."/>
            <person name="Zabarovsky E."/>
            <person name="Zhu S."/>
            <person name="Zimmer A."/>
            <person name="Hide W."/>
            <person name="Bult C."/>
            <person name="Grimmond S.M."/>
            <person name="Teasdale R.D."/>
            <person name="Liu E.T."/>
            <person name="Brusic V."/>
            <person name="Quackenbush J."/>
            <person name="Wahlestedt C."/>
            <person name="Mattick J.S."/>
            <person name="Hume D.A."/>
            <person name="Kai C."/>
            <person name="Sasaki D."/>
            <person name="Tomaru Y."/>
            <person name="Fukuda S."/>
            <person name="Kanamori-Katayama M."/>
            <person name="Suzuki M."/>
            <person name="Aoki J."/>
            <person name="Arakawa T."/>
            <person name="Iida J."/>
            <person name="Imamura K."/>
            <person name="Itoh M."/>
            <person name="Kato T."/>
            <person name="Kawaji H."/>
            <person name="Kawagashira N."/>
            <person name="Kawashima T."/>
            <person name="Kojima M."/>
            <person name="Kondo S."/>
            <person name="Konno H."/>
            <person name="Nakano K."/>
            <person name="Ninomiya N."/>
            <person name="Nishio T."/>
            <person name="Okada M."/>
            <person name="Plessy C."/>
            <person name="Shibata K."/>
            <person name="Shiraki T."/>
            <person name="Suzuki S."/>
            <person name="Tagami M."/>
            <person name="Waki K."/>
            <person name="Watahiki A."/>
            <person name="Okamura-Oho Y."/>
            <person name="Suzuki H."/>
            <person name="Kawai J."/>
            <person name="Hayashizaki Y."/>
        </authorList>
    </citation>
    <scope>NUCLEOTIDE SEQUENCE [LARGE SCALE MRNA]</scope>
    <source>
        <strain>C57BL/6J</strain>
        <tissue>Head</tissue>
    </source>
</reference>
<reference key="3">
    <citation type="journal article" date="2004" name="Genome Res.">
        <title>The status, quality, and expansion of the NIH full-length cDNA project: the Mammalian Gene Collection (MGC).</title>
        <authorList>
            <consortium name="The MGC Project Team"/>
        </authorList>
    </citation>
    <scope>NUCLEOTIDE SEQUENCE [LARGE SCALE MRNA]</scope>
    <source>
        <strain>C57BL/6J</strain>
        <tissue>Eye</tissue>
    </source>
</reference>
<reference key="4">
    <citation type="journal article" date="2007" name="Exp. Cell Res.">
        <title>The cold-inducible RNA-binding protein migrates from the nucleus to cytoplasmic stress granules by a methylation-dependent mechanism and acts as a translational repressor.</title>
        <authorList>
            <person name="De Leeuw F."/>
            <person name="Zhang T."/>
            <person name="Wauquier C."/>
            <person name="Huez G."/>
            <person name="Kruys V."/>
            <person name="Gueydan C."/>
        </authorList>
    </citation>
    <scope>FUNCTION</scope>
    <scope>METHYLATION</scope>
    <scope>SUBCELLULAR LOCATION</scope>
    <scope>MUTAGENESIS OF ARG-91; ARG-94; ARG-101; ARG-105; ARG-108; ARG-110; ARG-112; ARG-116; ARG-121; ARG-127 AND ARG-131</scope>
</reference>
<reference key="5">
    <citation type="journal article" date="2010" name="Cell">
        <title>A tissue-specific atlas of mouse protein phosphorylation and expression.</title>
        <authorList>
            <person name="Huttlin E.L."/>
            <person name="Jedrychowski M.P."/>
            <person name="Elias J.E."/>
            <person name="Goswami T."/>
            <person name="Rad R."/>
            <person name="Beausoleil S.A."/>
            <person name="Villen J."/>
            <person name="Haas W."/>
            <person name="Sowa M.E."/>
            <person name="Gygi S.P."/>
        </authorList>
    </citation>
    <scope>IDENTIFICATION BY MASS SPECTROMETRY [LARGE SCALE ANALYSIS]</scope>
    <source>
        <tissue>Brain</tissue>
        <tissue>Brown adipose tissue</tissue>
        <tissue>Liver</tissue>
        <tissue>Lung</tissue>
        <tissue>Pancreas</tissue>
        <tissue>Spleen</tissue>
        <tissue>Testis</tissue>
    </source>
</reference>
<gene>
    <name type="primary">Cirbp</name>
    <name type="synonym">Cirp</name>
</gene>
<name>CIRBP_MOUSE</name>
<keyword id="KW-0010">Activator</keyword>
<keyword id="KW-0963">Cytoplasm</keyword>
<keyword id="KW-0488">Methylation</keyword>
<keyword id="KW-0539">Nucleus</keyword>
<keyword id="KW-0597">Phosphoprotein</keyword>
<keyword id="KW-1185">Reference proteome</keyword>
<keyword id="KW-0678">Repressor</keyword>
<keyword id="KW-0694">RNA-binding</keyword>
<keyword id="KW-0346">Stress response</keyword>
<protein>
    <recommendedName>
        <fullName>Cold-inducible RNA-binding protein</fullName>
    </recommendedName>
    <alternativeName>
        <fullName>A18 hnRNP</fullName>
    </alternativeName>
    <alternativeName>
        <fullName>Glycine-rich RNA-binding protein CIRP</fullName>
    </alternativeName>
</protein>
<proteinExistence type="evidence at protein level"/>
<feature type="chain" id="PRO_0000081504" description="Cold-inducible RNA-binding protein">
    <location>
        <begin position="1"/>
        <end position="172"/>
    </location>
</feature>
<feature type="domain" description="RRM" evidence="3">
    <location>
        <begin position="6"/>
        <end position="84"/>
    </location>
</feature>
<feature type="region of interest" description="Disordered" evidence="4">
    <location>
        <begin position="70"/>
        <end position="172"/>
    </location>
</feature>
<feature type="compositionally biased region" description="Gly residues" evidence="4">
    <location>
        <begin position="93"/>
        <end position="105"/>
    </location>
</feature>
<feature type="compositionally biased region" description="Gly residues" evidence="4">
    <location>
        <begin position="114"/>
        <end position="137"/>
    </location>
</feature>
<feature type="compositionally biased region" description="Low complexity" evidence="4">
    <location>
        <begin position="138"/>
        <end position="172"/>
    </location>
</feature>
<feature type="modified residue" description="Phosphoserine" evidence="2">
    <location>
        <position position="130"/>
    </location>
</feature>
<feature type="modified residue" description="Phosphoserine" evidence="2">
    <location>
        <position position="138"/>
    </location>
</feature>
<feature type="modified residue" description="Phosphoserine" evidence="2">
    <location>
        <position position="146"/>
    </location>
</feature>
<feature type="modified residue" description="Phosphoserine" evidence="2">
    <location>
        <position position="156"/>
    </location>
</feature>
<feature type="modified residue" description="Phosphoserine" evidence="2">
    <location>
        <position position="159"/>
    </location>
</feature>
<feature type="modified residue" description="Phosphoserine" evidence="2">
    <location>
        <position position="163"/>
    </location>
</feature>
<feature type="mutagenesis site" description="Inhibits translational repression." evidence="5">
    <original>R</original>
    <variation>K</variation>
    <location>
        <position position="91"/>
    </location>
</feature>
<feature type="mutagenesis site" description="Inhibits stress granules localization and translational repression." evidence="5">
    <original>R</original>
    <variation>K</variation>
    <location>
        <position position="94"/>
    </location>
</feature>
<feature type="mutagenesis site" description="Inhibits translational repression." evidence="5">
    <original>R</original>
    <variation>K</variation>
    <location>
        <position position="101"/>
    </location>
</feature>
<feature type="mutagenesis site" description="Inhibits stress granules localization and translational repression." evidence="5">
    <original>R</original>
    <variation>K</variation>
    <location>
        <position position="105"/>
    </location>
</feature>
<feature type="mutagenesis site" description="Inhibits translational repression." evidence="5">
    <original>R</original>
    <variation>K</variation>
    <location>
        <position position="108"/>
    </location>
</feature>
<feature type="mutagenesis site" description="Inhibits translational repression." evidence="5">
    <original>R</original>
    <variation>K</variation>
    <location>
        <position position="110"/>
    </location>
</feature>
<feature type="mutagenesis site" description="Inhibits translational repression." evidence="5">
    <original>R</original>
    <variation>K</variation>
    <location>
        <position position="112"/>
    </location>
</feature>
<feature type="mutagenesis site" description="Inhibits stress granules localization and translational repression." evidence="5">
    <original>R</original>
    <variation>K</variation>
    <location>
        <position position="116"/>
    </location>
</feature>
<feature type="mutagenesis site" description="Inhibits translational repression." evidence="5">
    <original>R</original>
    <variation>K</variation>
    <location>
        <position position="121"/>
    </location>
</feature>
<feature type="mutagenesis site" description="Inhibits translational repression." evidence="5">
    <original>R</original>
    <variation>K</variation>
    <location>
        <position position="127"/>
    </location>
</feature>
<feature type="mutagenesis site" description="Inhibits translational repression." evidence="5">
    <original>R</original>
    <variation>K</variation>
    <location>
        <position position="131"/>
    </location>
</feature>
<comment type="function">
    <text evidence="5 6">Cold-inducible mRNA binding protein that plays a protective role in the genotoxic stress response by stabilizing transcripts of genes involved in cell survival. Promotes assembly of stress granules (SGs), when overexpressed. Seems to play an essential role in cold-induced suppression of cell proliferation. Acts as a translational repressor. Acts as a translational activator. Binds specifically to the 3'-untranslated regions (3'-UTRs) of stress-responsive transcripts RPA2 and TXN.</text>
</comment>
<comment type="subunit">
    <text evidence="1">Interacts with EIF4G1. Associates with ribosomes (By similarity).</text>
</comment>
<comment type="subcellular location">
    <subcellularLocation>
        <location evidence="5">Nucleus</location>
        <location evidence="5">Nucleoplasm</location>
    </subcellularLocation>
    <subcellularLocation>
        <location evidence="5">Cytoplasm</location>
    </subcellularLocation>
    <text evidence="1">Translocates from the nucleus to the cytoplasm after exposure to UV radiation (By similarity). Translocates from the nucleus to the cytoplasm into stress granules upon various cytoplasmic stresses, such as osmotic and heat shocks. Its recruitment into stress granules occurs in the absence of TIAR proteins.</text>
</comment>
<comment type="tissue specificity">
    <text>Ubiquitous.</text>
</comment>
<comment type="induction">
    <text evidence="6">Up-regulated upon mild cold-shock and hypoxia.</text>
</comment>
<comment type="domain">
    <text evidence="1">Both the RRM domain and the arginine, glycine (RGG) rich domain are necessary for binding to the TXN 3'-untranslated region (By similarity). Both the RRM domain and the arginine, glycine (RGG) rich domain (RGG repeats) are necessary for optimal recruitment into SGs upon cellular stress. The C-terminal domain containing RGG repeats is necessary for translational repression.</text>
</comment>
<comment type="PTM">
    <text evidence="5">Methylated on arginine residues. Methylation of the RGG motifs is a prerequisite for recruitment into SGs.</text>
</comment>
<comment type="PTM">
    <text evidence="1">Phosphorylated by CK2, GSK3A and GSK3B. Phosphorylation by GSK3B increases RNA-binding activity to the TXN 3'-UTR transcript upon exposure to UV radiation (By similarity).</text>
</comment>
<accession>P60824</accession>
<accession>O09069</accession>
<accession>O09148</accession>
<accession>Q3V1A6</accession>
<accession>Q61413</accession>